<organism>
    <name type="scientific">Haemophilus influenzae (strain ATCC 51907 / DSM 11121 / KW20 / Rd)</name>
    <dbReference type="NCBI Taxonomy" id="71421"/>
    <lineage>
        <taxon>Bacteria</taxon>
        <taxon>Pseudomonadati</taxon>
        <taxon>Pseudomonadota</taxon>
        <taxon>Gammaproteobacteria</taxon>
        <taxon>Pasteurellales</taxon>
        <taxon>Pasteurellaceae</taxon>
        <taxon>Haemophilus</taxon>
    </lineage>
</organism>
<proteinExistence type="inferred from homology"/>
<reference key="1">
    <citation type="journal article" date="1995" name="Science">
        <title>Whole-genome random sequencing and assembly of Haemophilus influenzae Rd.</title>
        <authorList>
            <person name="Fleischmann R.D."/>
            <person name="Adams M.D."/>
            <person name="White O."/>
            <person name="Clayton R.A."/>
            <person name="Kirkness E.F."/>
            <person name="Kerlavage A.R."/>
            <person name="Bult C.J."/>
            <person name="Tomb J.-F."/>
            <person name="Dougherty B.A."/>
            <person name="Merrick J.M."/>
            <person name="McKenney K."/>
            <person name="Sutton G.G."/>
            <person name="FitzHugh W."/>
            <person name="Fields C.A."/>
            <person name="Gocayne J.D."/>
            <person name="Scott J.D."/>
            <person name="Shirley R."/>
            <person name="Liu L.-I."/>
            <person name="Glodek A."/>
            <person name="Kelley J.M."/>
            <person name="Weidman J.F."/>
            <person name="Phillips C.A."/>
            <person name="Spriggs T."/>
            <person name="Hedblom E."/>
            <person name="Cotton M.D."/>
            <person name="Utterback T.R."/>
            <person name="Hanna M.C."/>
            <person name="Nguyen D.T."/>
            <person name="Saudek D.M."/>
            <person name="Brandon R.C."/>
            <person name="Fine L.D."/>
            <person name="Fritchman J.L."/>
            <person name="Fuhrmann J.L."/>
            <person name="Geoghagen N.S.M."/>
            <person name="Gnehm C.L."/>
            <person name="McDonald L.A."/>
            <person name="Small K.V."/>
            <person name="Fraser C.M."/>
            <person name="Smith H.O."/>
            <person name="Venter J.C."/>
        </authorList>
    </citation>
    <scope>NUCLEOTIDE SEQUENCE [LARGE SCALE GENOMIC DNA]</scope>
    <source>
        <strain>ATCC 51907 / DSM 11121 / KW20 / Rd</strain>
    </source>
</reference>
<name>Y1416_HAEIN</name>
<evidence type="ECO:0000255" key="1"/>
<feature type="signal peptide" evidence="1">
    <location>
        <begin position="1"/>
        <end position="27"/>
    </location>
</feature>
<feature type="chain" id="PRO_0000013969" description="Uncharacterized protein HI_1416">
    <location>
        <begin position="28"/>
        <end position="118"/>
    </location>
</feature>
<gene>
    <name type="ordered locus">HI_1416</name>
</gene>
<protein>
    <recommendedName>
        <fullName>Uncharacterized protein HI_1416</fullName>
    </recommendedName>
</protein>
<dbReference type="EMBL" id="L42023">
    <property type="protein sequence ID" value="AAC23067.1"/>
    <property type="molecule type" value="Genomic_DNA"/>
</dbReference>
<dbReference type="PIR" id="I64028">
    <property type="entry name" value="I64028"/>
</dbReference>
<dbReference type="RefSeq" id="NP_439567.1">
    <property type="nucleotide sequence ID" value="NC_000907.1"/>
</dbReference>
<dbReference type="STRING" id="71421.HI_1416"/>
<dbReference type="TCDB" id="1.E.2.1.3">
    <property type="family name" value="the Lambda holin s (Lambda holin) family"/>
</dbReference>
<dbReference type="EnsemblBacteria" id="AAC23067">
    <property type="protein sequence ID" value="AAC23067"/>
    <property type="gene ID" value="HI_1416"/>
</dbReference>
<dbReference type="KEGG" id="hin:HI_1416"/>
<dbReference type="PATRIC" id="fig|71421.8.peg.1475"/>
<dbReference type="eggNOG" id="ENOG50339VT">
    <property type="taxonomic scope" value="Bacteria"/>
</dbReference>
<dbReference type="HOGENOM" id="CLU_118968_1_0_6"/>
<dbReference type="OrthoDB" id="6711255at2"/>
<dbReference type="PhylomeDB" id="P44188"/>
<dbReference type="BioCyc" id="HINF71421:G1GJ1-1440-MONOMER"/>
<dbReference type="Proteomes" id="UP000000579">
    <property type="component" value="Chromosome"/>
</dbReference>
<dbReference type="InterPro" id="IPR006481">
    <property type="entry name" value="Phage_lambda_GpS_holin"/>
</dbReference>
<dbReference type="NCBIfam" id="TIGR01594">
    <property type="entry name" value="holin_lambda"/>
    <property type="match status" value="1"/>
</dbReference>
<dbReference type="Pfam" id="PF05106">
    <property type="entry name" value="Phage_holin_3_1"/>
    <property type="match status" value="1"/>
</dbReference>
<sequence>MPIKEPDVWALIWSWLQTNLSSSSAQSAFWALFISLLRFGFMRKKPAIRYVLIDAAMCASIAGVAVPICTHLFGHTEYSSFLGTMIGFVGTEKIREFLFKFINRRIEKDDNDDFRSDI</sequence>
<keyword id="KW-1185">Reference proteome</keyword>
<keyword id="KW-0732">Signal</keyword>
<accession>P44188</accession>